<protein>
    <recommendedName>
        <fullName evidence="4">Glycosyltransferase sdnJ</fullName>
        <ecNumber evidence="3">2.4.1.353</ecNumber>
    </recommendedName>
    <alternativeName>
        <fullName evidence="4">Sordarin/hypoxysordarin biosynthesis cluster protein J</fullName>
    </alternativeName>
</protein>
<name>SDNJ_SORAA</name>
<comment type="function">
    <text evidence="3">Glycosyltransferase; part of the gene cluster that mediates the biosynthesis of sordarin and hypoxysordarin, glycoside antibiotics with a unique tetracyclic diterpene aglycone structure (PubMed:27072286). First, the geranylgeranyl diphosphate synthase sdnC constructs GGDP from farnesyl diphosphate and isopentenyl diphosphate (PubMed:27072286). The diterpene cyclase sdnA then catalyzes the cyclization of GGDP to afford cycloaraneosene (PubMed:27072286). Cycloaraneosene is then hydroxylated four times by the putative cytochrome P450 monooxygenases sdnB, sdnE, sdnF and sdnH to give a hydroxylated cycloaraneosene derivative such as cycloaraneosene-8,9,13,19-tetraol (PubMed:27072286). Although the order of the hydroxylations is unclear, at least C8, C9 and C13 of the cycloaraneosene skeleton are hydroxylated before the sordaricin formation (PubMed:27072286). Dehydration of the 13-hydroxy group of the hydroxylated cycloaraneosene derivative might be catalyzed by an unassigned hypothetical protein such as sdnG and sdnP to construct the cyclopentadiene moiety (PubMed:27072286). The FAD-dependent oxidoreductase sdnN is proposed to catalyze the oxidation at C9 of the hydroxylated cycloaraneosene derivative and also catalyze the Baeyer-Villiger oxidation to give the lactone intermediate (PubMed:27072286). The presumed lactone intermediate would be hydrolyzed to give an acrolein moiety and a carboxylate moiety (PubMed:27072286). Then, [4+2]cycloaddition would occur between the acrolein moiety and the cyclopentadiene moiety to give sordaricin (PubMed:27072286). SdnN might also be involved in the [4+2]cycloaddition after the hypothesized oxidation to accommodate the oxidized product and prompt the [4+2]cycloaddition (PubMed:27072286). GDP-6-deoxy-D-altrose may be biosynthesized from GDP-D-mannose by the putative GDP-mannose-4,6-dehydratase sdnI and the short-chain dehydrogenase sdnK (PubMed:27072286). The glycosyltransferase sdnJ catalyzes the attachment of 6-deoxy-D-altrose onto the 19-hydroxy group of sordaricin to give 4'-O-demethylsordarin (PubMed:27072286). The methyltransferase sdnD would complete the biosynthesis of sordarin (PubMed:27072286). Sordarin can be further modified into hypoxysordarin (PubMed:27072286). The unique acyl chain at the 3'-hydroxy group of hypoxysordarin would be constructed by an iterative type I PKS sdnO and the trans-acting polyketide methyltransferase sdnL. SdnL would be responsible for the introduction of an alpha-methyl group of the polyketide chain (PubMed:27072286). Alternatively, the beta-lactamase-like protein sdnR might be responsible for the cleavage and transfer of the polyketide chain from the PKS sdnO to sordarin (PubMed:27072286). Two putative cytochrome P450 monooxygenases, sdnQ and sdnT, might catalyze the epoxidations of the polyketide chain to complete the biosynthesis of hypoxysordarin (PubMed:27072286). Transcriptional regulators sdnM and sdnS are presumably encoded for the transcriptional regulation of the expression of the sdn gene cluster (PubMed:27072286).</text>
</comment>
<comment type="catalytic activity">
    <reaction evidence="3">
        <text>sordaricin + GDP-6-deoxy-alpha-D-altrose = 4'-O-demethylsordarin + GDP + H(+)</text>
        <dbReference type="Rhea" id="RHEA:11400"/>
        <dbReference type="ChEBI" id="CHEBI:15378"/>
        <dbReference type="ChEBI" id="CHEBI:58189"/>
        <dbReference type="ChEBI" id="CHEBI:140232"/>
        <dbReference type="ChEBI" id="CHEBI:140233"/>
        <dbReference type="ChEBI" id="CHEBI:140433"/>
        <dbReference type="EC" id="2.4.1.353"/>
    </reaction>
</comment>
<comment type="biophysicochemical properties">
    <phDependence>
        <text evidence="3">Optimum pH is 7.5.</text>
    </phDependence>
    <temperatureDependence>
        <text evidence="3">Optimum temperature is 30 degrees Celsius.</text>
    </temperatureDependence>
</comment>
<comment type="pathway">
    <text evidence="3">Antibiotic biosynthesis.</text>
</comment>
<comment type="similarity">
    <text evidence="5">Belongs to the UDP-glycosyltransferase family.</text>
</comment>
<reference key="1">
    <citation type="journal article" date="2016" name="J. Antibiot.">
        <title>Genome mining of the sordarin biosynthetic gene cluster from Sordaria araneosa Cain ATCC 36386: characterization of cycloaraneosene synthase and GDP-6-deoxyaltrose transferase.</title>
        <authorList>
            <person name="Kudo F."/>
            <person name="Matsuura Y."/>
            <person name="Hayashi T."/>
            <person name="Fukushima M."/>
            <person name="Eguchi T."/>
        </authorList>
    </citation>
    <scope>NUCLEOTIDE SEQUENCE [GENOMIC DNA]</scope>
    <scope>FUNCTION</scope>
    <scope>CATALYTIC ACTIVITY</scope>
    <scope>BIOPHYSICOCHEMICAL PROPERTIES</scope>
    <scope>PATHWAY</scope>
    <source>
        <strain>ATCC 36386 / NRRL 3196</strain>
    </source>
</reference>
<evidence type="ECO:0000255" key="1"/>
<evidence type="ECO:0000255" key="2">
    <source>
        <dbReference type="PROSITE-ProRule" id="PRU00498"/>
    </source>
</evidence>
<evidence type="ECO:0000269" key="3">
    <source>
    </source>
</evidence>
<evidence type="ECO:0000303" key="4">
    <source>
    </source>
</evidence>
<evidence type="ECO:0000305" key="5"/>
<gene>
    <name evidence="4" type="primary">sdnJ</name>
</gene>
<keyword id="KW-0045">Antibiotic biosynthesis</keyword>
<keyword id="KW-0325">Glycoprotein</keyword>
<keyword id="KW-0328">Glycosyltransferase</keyword>
<keyword id="KW-0732">Signal</keyword>
<keyword id="KW-0808">Transferase</keyword>
<proteinExistence type="evidence at protein level"/>
<accession>A0A1B4XBH6</accession>
<dbReference type="EC" id="2.4.1.353" evidence="3"/>
<dbReference type="EMBL" id="LC079035">
    <property type="protein sequence ID" value="BAV32154.1"/>
    <property type="molecule type" value="Genomic_DNA"/>
</dbReference>
<dbReference type="SMR" id="A0A1B4XBH6"/>
<dbReference type="GlyCosmos" id="A0A1B4XBH6">
    <property type="glycosylation" value="1 site, No reported glycans"/>
</dbReference>
<dbReference type="KEGG" id="ag:BAV32154"/>
<dbReference type="BRENDA" id="2.4.1.353">
    <property type="organism ID" value="15346"/>
</dbReference>
<dbReference type="GO" id="GO:0016758">
    <property type="term" value="F:hexosyltransferase activity"/>
    <property type="evidence" value="ECO:0007669"/>
    <property type="project" value="UniProtKB-ARBA"/>
</dbReference>
<dbReference type="GO" id="GO:0008194">
    <property type="term" value="F:UDP-glycosyltransferase activity"/>
    <property type="evidence" value="ECO:0007669"/>
    <property type="project" value="TreeGrafter"/>
</dbReference>
<dbReference type="GO" id="GO:0017000">
    <property type="term" value="P:antibiotic biosynthetic process"/>
    <property type="evidence" value="ECO:0007669"/>
    <property type="project" value="UniProtKB-KW"/>
</dbReference>
<dbReference type="Gene3D" id="3.40.50.2000">
    <property type="entry name" value="Glycogen Phosphorylase B"/>
    <property type="match status" value="2"/>
</dbReference>
<dbReference type="InterPro" id="IPR010610">
    <property type="entry name" value="EryCIII-like_C"/>
</dbReference>
<dbReference type="InterPro" id="IPR050271">
    <property type="entry name" value="UDP-glycosyltransferase"/>
</dbReference>
<dbReference type="PANTHER" id="PTHR48043">
    <property type="entry name" value="EG:EG0003.4 PROTEIN-RELATED"/>
    <property type="match status" value="1"/>
</dbReference>
<dbReference type="PANTHER" id="PTHR48043:SF145">
    <property type="entry name" value="FI06409P-RELATED"/>
    <property type="match status" value="1"/>
</dbReference>
<dbReference type="Pfam" id="PF06722">
    <property type="entry name" value="EryCIII-like_C"/>
    <property type="match status" value="1"/>
</dbReference>
<dbReference type="SUPFAM" id="SSF53756">
    <property type="entry name" value="UDP-Glycosyltransferase/glycogen phosphorylase"/>
    <property type="match status" value="1"/>
</dbReference>
<feature type="signal peptide" evidence="1">
    <location>
        <begin position="1"/>
        <end position="24"/>
    </location>
</feature>
<feature type="chain" id="PRO_0000441061" description="Glycosyltransferase sdnJ">
    <location>
        <begin position="25"/>
        <end position="512"/>
    </location>
</feature>
<feature type="glycosylation site" description="N-linked (GlcNAc...) asparagine" evidence="2">
    <location>
        <position position="207"/>
    </location>
</feature>
<organism>
    <name type="scientific">Sordaria araneosa</name>
    <name type="common">Pleurage araneosa</name>
    <dbReference type="NCBI Taxonomy" id="573841"/>
    <lineage>
        <taxon>Eukaryota</taxon>
        <taxon>Fungi</taxon>
        <taxon>Dikarya</taxon>
        <taxon>Ascomycota</taxon>
        <taxon>Pezizomycotina</taxon>
        <taxon>Sordariomycetes</taxon>
        <taxon>Sordariomycetidae</taxon>
        <taxon>Sordariales</taxon>
        <taxon>Sordariaceae</taxon>
        <taxon>Sordaria</taxon>
    </lineage>
</organism>
<sequence length="512" mass="56596">MHAKRPSVLFFTISDFGYVNVVLATIYELLLRDEVDIHIASFAPLKPRLESLVQLVKHETKKSTDSSPGVHFHNLADFPGFATWAAQSKDRKKADVPHPPGRNGAGRVALLTLKALAIMEPEQYLSLFDWSADLTRKLNPALVMVDPILLPCHDMARTLGRKYAVLHPWSVADGLIPRQGWWSEYWKYPAFSTGFPYPLPWGKIPENISCYLTSKQCHSHPKVQALNQARYSHGIKPDPLGSFTPFAEGVPQITPSLPAVDLPMGNIPKNVFDCGPILVASPPIETSDPDLLSWLRRAPTVLVSLGTHFEAYAETVREQAIGIRILLEARPDVQVLWKLKREATSEKSGQENLESILGQAIQDGRVRTESWLKADPVAILRSGHIVCSVHHGGANSYFEATWAGVPQIVLAMWYDTFDYATRVEYLGIGAYGNREKGRSCVVDEDNYVAPNLVDGEEFGAALLRVVGRNRADPGAAQITKSAVILGEVCRRSGGRVRSAEIVTGLCFGKLDY</sequence>